<evidence type="ECO:0000250" key="1">
    <source>
        <dbReference type="UniProtKB" id="P02649"/>
    </source>
</evidence>
<evidence type="ECO:0000255" key="2"/>
<evidence type="ECO:0000305" key="3"/>
<reference key="1">
    <citation type="submission" date="2014-12" db="EMBL/GenBank/DDBJ databases">
        <title>The de novo genome assembly and annotation of a female domestic dromedary of North African origin.</title>
        <authorList>
            <person name="Fitak R."/>
            <person name="Mohandesan E."/>
            <person name="Burger P.A."/>
            <person name="Jukka C."/>
        </authorList>
    </citation>
    <scope>NUCLEOTIDE SEQUENCE [LARGE SCALE GENOMIC DNA]</scope>
</reference>
<reference key="2">
    <citation type="unpublished observations" date="2016-07">
        <authorList>
            <person name="Puppione D.L."/>
        </authorList>
    </citation>
    <scope>IDENTIFICATION</scope>
</reference>
<dbReference type="EMBL" id="JWIN01034738">
    <property type="status" value="NOT_ANNOTATED_CDS"/>
    <property type="molecule type" value="Genomic_DNA"/>
</dbReference>
<dbReference type="SMR" id="P0DOC3"/>
<dbReference type="STRING" id="9838.ENSCDRP00005008803"/>
<dbReference type="GlyCosmos" id="P0DOC3">
    <property type="glycosylation" value="2 sites, No reported glycans"/>
</dbReference>
<dbReference type="GO" id="GO:0042627">
    <property type="term" value="C:chylomicron"/>
    <property type="evidence" value="ECO:0007669"/>
    <property type="project" value="UniProtKB-KW"/>
</dbReference>
<dbReference type="GO" id="GO:0070062">
    <property type="term" value="C:extracellular exosome"/>
    <property type="evidence" value="ECO:0000250"/>
    <property type="project" value="UniProtKB"/>
</dbReference>
<dbReference type="GO" id="GO:0031012">
    <property type="term" value="C:extracellular matrix"/>
    <property type="evidence" value="ECO:0000250"/>
    <property type="project" value="UniProtKB"/>
</dbReference>
<dbReference type="GO" id="GO:0005615">
    <property type="term" value="C:extracellular space"/>
    <property type="evidence" value="ECO:0000250"/>
    <property type="project" value="UniProtKB"/>
</dbReference>
<dbReference type="GO" id="GO:0034364">
    <property type="term" value="C:high-density lipoprotein particle"/>
    <property type="evidence" value="ECO:0000250"/>
    <property type="project" value="UniProtKB"/>
</dbReference>
<dbReference type="GO" id="GO:0034363">
    <property type="term" value="C:intermediate-density lipoprotein particle"/>
    <property type="evidence" value="ECO:0000250"/>
    <property type="project" value="UniProtKB"/>
</dbReference>
<dbReference type="GO" id="GO:0034362">
    <property type="term" value="C:low-density lipoprotein particle"/>
    <property type="evidence" value="ECO:0000250"/>
    <property type="project" value="UniProtKB"/>
</dbReference>
<dbReference type="GO" id="GO:0097487">
    <property type="term" value="C:multivesicular body, internal vesicle"/>
    <property type="evidence" value="ECO:0000250"/>
    <property type="project" value="UniProtKB"/>
</dbReference>
<dbReference type="GO" id="GO:0034361">
    <property type="term" value="C:very-low-density lipoprotein particle"/>
    <property type="evidence" value="ECO:0000250"/>
    <property type="project" value="UniProtKB"/>
</dbReference>
<dbReference type="GO" id="GO:0120020">
    <property type="term" value="F:cholesterol transfer activity"/>
    <property type="evidence" value="ECO:0007669"/>
    <property type="project" value="TreeGrafter"/>
</dbReference>
<dbReference type="GO" id="GO:0043395">
    <property type="term" value="F:heparan sulfate proteoglycan binding"/>
    <property type="evidence" value="ECO:0000250"/>
    <property type="project" value="UniProtKB"/>
</dbReference>
<dbReference type="GO" id="GO:0008201">
    <property type="term" value="F:heparin binding"/>
    <property type="evidence" value="ECO:0000250"/>
    <property type="project" value="UniProtKB"/>
</dbReference>
<dbReference type="GO" id="GO:0042802">
    <property type="term" value="F:identical protein binding"/>
    <property type="evidence" value="ECO:0000250"/>
    <property type="project" value="UniProtKB"/>
</dbReference>
<dbReference type="GO" id="GO:0050750">
    <property type="term" value="F:low-density lipoprotein particle receptor binding"/>
    <property type="evidence" value="ECO:0000250"/>
    <property type="project" value="UniProtKB"/>
</dbReference>
<dbReference type="GO" id="GO:0060228">
    <property type="term" value="F:phosphatidylcholine-sterol O-acyltransferase activator activity"/>
    <property type="evidence" value="ECO:0007669"/>
    <property type="project" value="TreeGrafter"/>
</dbReference>
<dbReference type="GO" id="GO:0005543">
    <property type="term" value="F:phospholipid binding"/>
    <property type="evidence" value="ECO:0007669"/>
    <property type="project" value="TreeGrafter"/>
</dbReference>
<dbReference type="GO" id="GO:0055090">
    <property type="term" value="P:acylglycerol homeostasis"/>
    <property type="evidence" value="ECO:0007669"/>
    <property type="project" value="TreeGrafter"/>
</dbReference>
<dbReference type="GO" id="GO:0033344">
    <property type="term" value="P:cholesterol efflux"/>
    <property type="evidence" value="ECO:0000250"/>
    <property type="project" value="UniProtKB"/>
</dbReference>
<dbReference type="GO" id="GO:0008203">
    <property type="term" value="P:cholesterol metabolic process"/>
    <property type="evidence" value="ECO:0007669"/>
    <property type="project" value="TreeGrafter"/>
</dbReference>
<dbReference type="GO" id="GO:0034382">
    <property type="term" value="P:chylomicron remnant clearance"/>
    <property type="evidence" value="ECO:0000250"/>
    <property type="project" value="UniProtKB"/>
</dbReference>
<dbReference type="GO" id="GO:0034380">
    <property type="term" value="P:high-density lipoprotein particle assembly"/>
    <property type="evidence" value="ECO:0000250"/>
    <property type="project" value="UniProtKB"/>
</dbReference>
<dbReference type="GO" id="GO:0071831">
    <property type="term" value="P:intermediate-density lipoprotein particle clearance"/>
    <property type="evidence" value="ECO:0000250"/>
    <property type="project" value="UniProtKB"/>
</dbReference>
<dbReference type="GO" id="GO:0042158">
    <property type="term" value="P:lipoprotein biosynthetic process"/>
    <property type="evidence" value="ECO:0000250"/>
    <property type="project" value="UniProtKB"/>
</dbReference>
<dbReference type="GO" id="GO:0032438">
    <property type="term" value="P:melanosome organization"/>
    <property type="evidence" value="ECO:0000250"/>
    <property type="project" value="UniProtKB"/>
</dbReference>
<dbReference type="GO" id="GO:1905907">
    <property type="term" value="P:negative regulation of amyloid fibril formation"/>
    <property type="evidence" value="ECO:0000250"/>
    <property type="project" value="UniProtKB"/>
</dbReference>
<dbReference type="GO" id="GO:0033700">
    <property type="term" value="P:phospholipid efflux"/>
    <property type="evidence" value="ECO:0007669"/>
    <property type="project" value="TreeGrafter"/>
</dbReference>
<dbReference type="GO" id="GO:1900223">
    <property type="term" value="P:positive regulation of amyloid-beta clearance"/>
    <property type="evidence" value="ECO:0000250"/>
    <property type="project" value="UniProtKB"/>
</dbReference>
<dbReference type="GO" id="GO:0071830">
    <property type="term" value="P:triglyceride-rich lipoprotein particle clearance"/>
    <property type="evidence" value="ECO:0000250"/>
    <property type="project" value="UniProtKB"/>
</dbReference>
<dbReference type="GO" id="GO:0034447">
    <property type="term" value="P:very-low-density lipoprotein particle clearance"/>
    <property type="evidence" value="ECO:0000250"/>
    <property type="project" value="UniProtKB"/>
</dbReference>
<dbReference type="FunFam" id="1.20.120.20:FF:000002">
    <property type="entry name" value="Apolipoprotein E"/>
    <property type="match status" value="1"/>
</dbReference>
<dbReference type="FunFam" id="1.20.120.20:FF:000003">
    <property type="entry name" value="Apolipoprotein E"/>
    <property type="match status" value="1"/>
</dbReference>
<dbReference type="Gene3D" id="1.20.120.20">
    <property type="entry name" value="Apolipoprotein"/>
    <property type="match status" value="1"/>
</dbReference>
<dbReference type="Gene3D" id="1.20.5.1230">
    <property type="entry name" value="Apolipoprotein A-I"/>
    <property type="match status" value="1"/>
</dbReference>
<dbReference type="InterPro" id="IPR000074">
    <property type="entry name" value="ApoA_E"/>
</dbReference>
<dbReference type="InterPro" id="IPR050163">
    <property type="entry name" value="Apolipoprotein_A1/A4/E"/>
</dbReference>
<dbReference type="PANTHER" id="PTHR18976">
    <property type="entry name" value="APOLIPOPROTEIN"/>
    <property type="match status" value="1"/>
</dbReference>
<dbReference type="PANTHER" id="PTHR18976:SF2">
    <property type="entry name" value="APOLIPOPROTEIN E"/>
    <property type="match status" value="1"/>
</dbReference>
<dbReference type="Pfam" id="PF01442">
    <property type="entry name" value="Apolipoprotein"/>
    <property type="match status" value="1"/>
</dbReference>
<dbReference type="SUPFAM" id="SSF58113">
    <property type="entry name" value="Apolipoprotein A-I"/>
    <property type="match status" value="1"/>
</dbReference>
<accession>P0DOC3</accession>
<gene>
    <name type="primary">APOE</name>
</gene>
<comment type="function">
    <text evidence="1">APOE is an apolipoprotein, a protein associating with lipid particles, that mainly functions in lipoprotein-mediated lipid transport between organs via the plasma and interstitial fluids. APOE is a core component of plasma lipoproteins and is involved in their production, conversion and clearance. Apolipoproteins are amphipathic molecules that interact both with lipids of the lipoprotein particle core and the aqueous environment of the plasma. As such, APOE associates with chylomicrons, chylomicron remnants, very low density lipoproteins (VLDL) and intermediate density lipoproteins (IDL) but shows a preferential binding to high-density lipoproteins (HDL). It also binds a wide range of cellular receptors including the LDL receptor/LDLR and the very low-density lipoprotein receptor/VLDLR that mediate the cellular uptake of the APOE-containing lipoprotein particles. Finally, APOE also has a heparin-binding activity and binds heparan-sulfate proteoglycans on the surface of cells, a property that supports the capture and the receptor-mediated uptake of APOE-containing lipoproteins by cells.</text>
</comment>
<comment type="subunit">
    <text evidence="1">Homotetramer. May interact with ABCA1; functionally associated with ABCA1 in the biogenesis of HDLs. May interact with APP/A4 amyloid-beta peptide; the interaction is extremely stable in vitro but its physiological significance is unclear. May interact with MAPT. May interact with MAP2. In the cerebrospinal fluid, interacts with secreted SORL1. Interacts with PMEL; this allows the loading of PMEL luminal fragment on ILVs to induce fibril nucleation.</text>
</comment>
<comment type="subcellular location">
    <subcellularLocation>
        <location evidence="1">Secreted</location>
    </subcellularLocation>
    <subcellularLocation>
        <location evidence="1">Secreted</location>
        <location evidence="1">Extracellular space</location>
    </subcellularLocation>
    <subcellularLocation>
        <location evidence="1">Secreted</location>
        <location evidence="1">Extracellular space</location>
        <location evidence="1">Extracellular matrix</location>
    </subcellularLocation>
    <subcellularLocation>
        <location evidence="1">Extracellular vesicle</location>
    </subcellularLocation>
    <subcellularLocation>
        <location evidence="1">Endosome</location>
        <location evidence="1">Multivesicular body</location>
    </subcellularLocation>
    <text evidence="1">In the plasma, APOE is associated with chylomicrons, chylomicrons remnants, VLDL, LDL and HDL lipoproteins. Lipid poor oligomeric APOE is associated with the extracellular matrix in a calcium- and heparan-sulfate proteoglycans-dependent manner. Lipidation induces the release from the extracellular matrix. Colocalizes with CD63 and PMEL at exosomes and in intraluminal vesicles within multivesicular endosomes.</text>
</comment>
<comment type="PTM">
    <text evidence="1">APOE exists as multiple glycosylated and sialylated glycoforms within cells and in plasma. The extent of glycosylation and sialylation are tissue and context specific.</text>
</comment>
<comment type="PTM">
    <text evidence="1">Glycated in plasma VLDL.</text>
</comment>
<comment type="PTM">
    <text evidence="1">Phosphorylated by FAM20C in the extracellular medium.</text>
</comment>
<comment type="similarity">
    <text evidence="3">Belongs to the apolipoprotein A1/A4/E family.</text>
</comment>
<organism>
    <name type="scientific">Camelus dromedarius</name>
    <name type="common">Dromedary</name>
    <name type="synonym">Arabian camel</name>
    <dbReference type="NCBI Taxonomy" id="9838"/>
    <lineage>
        <taxon>Eukaryota</taxon>
        <taxon>Metazoa</taxon>
        <taxon>Chordata</taxon>
        <taxon>Craniata</taxon>
        <taxon>Vertebrata</taxon>
        <taxon>Euteleostomi</taxon>
        <taxon>Mammalia</taxon>
        <taxon>Eutheria</taxon>
        <taxon>Laurasiatheria</taxon>
        <taxon>Artiodactyla</taxon>
        <taxon>Tylopoda</taxon>
        <taxon>Camelidae</taxon>
        <taxon>Camelus</taxon>
    </lineage>
</organism>
<feature type="signal peptide" evidence="2">
    <location>
        <begin position="1"/>
        <end position="18"/>
    </location>
</feature>
<feature type="chain" id="PRO_0000437471" description="Apolipoprotein E">
    <location>
        <begin position="19"/>
        <end position="317"/>
    </location>
</feature>
<feature type="repeat" description="1">
    <location>
        <begin position="79"/>
        <end position="100"/>
    </location>
</feature>
<feature type="repeat" description="2">
    <location>
        <begin position="101"/>
        <end position="122"/>
    </location>
</feature>
<feature type="repeat" description="3">
    <location>
        <begin position="123"/>
        <end position="144"/>
    </location>
</feature>
<feature type="repeat" description="4">
    <location>
        <begin position="145"/>
        <end position="166"/>
    </location>
</feature>
<feature type="repeat" description="5">
    <location>
        <begin position="167"/>
        <end position="188"/>
    </location>
</feature>
<feature type="repeat" description="6">
    <location>
        <begin position="189"/>
        <end position="210"/>
    </location>
</feature>
<feature type="repeat" description="7">
    <location>
        <begin position="211"/>
        <end position="232"/>
    </location>
</feature>
<feature type="repeat" description="8">
    <location>
        <begin position="233"/>
        <end position="254"/>
    </location>
</feature>
<feature type="region of interest" description="8 X 22 AA approximate tandem repeats">
    <location>
        <begin position="79"/>
        <end position="254"/>
    </location>
</feature>
<feature type="region of interest" description="LDL and other lipoprotein receptors binding" evidence="1">
    <location>
        <begin position="157"/>
        <end position="167"/>
    </location>
</feature>
<feature type="region of interest" description="Lipid-binding and lipoprotein association" evidence="1">
    <location>
        <begin position="209"/>
        <end position="289"/>
    </location>
</feature>
<feature type="region of interest" description="Homooligomerization" evidence="1">
    <location>
        <begin position="265"/>
        <end position="317"/>
    </location>
</feature>
<feature type="region of interest" description="Specificity for association with VLDL" evidence="1">
    <location>
        <begin position="277"/>
        <end position="289"/>
    </location>
</feature>
<feature type="binding site" evidence="1">
    <location>
        <begin position="161"/>
        <end position="164"/>
    </location>
    <ligand>
        <name>heparin</name>
        <dbReference type="ChEBI" id="CHEBI:28304"/>
    </ligand>
</feature>
<feature type="binding site" evidence="1">
    <location>
        <begin position="228"/>
        <end position="235"/>
    </location>
    <ligand>
        <name>heparin</name>
        <dbReference type="ChEBI" id="CHEBI:28304"/>
    </ligand>
</feature>
<feature type="modified residue" description="Methionine sulfoxide" evidence="1">
    <location>
        <position position="142"/>
    </location>
</feature>
<feature type="glycosylation site" description="O-linked (GalNAc...) threonine" evidence="1">
    <location>
        <position position="211"/>
    </location>
</feature>
<feature type="glycosylation site" description="O-linked (GalNAc...) threonine" evidence="1">
    <location>
        <position position="310"/>
    </location>
</feature>
<name>APOE_CAMDR</name>
<proteinExistence type="inferred from homology"/>
<keyword id="KW-0162">Chylomicron</keyword>
<keyword id="KW-0967">Endosome</keyword>
<keyword id="KW-0272">Extracellular matrix</keyword>
<keyword id="KW-0325">Glycoprotein</keyword>
<keyword id="KW-0345">HDL</keyword>
<keyword id="KW-0358">Heparin-binding</keyword>
<keyword id="KW-0445">Lipid transport</keyword>
<keyword id="KW-0446">Lipid-binding</keyword>
<keyword id="KW-0558">Oxidation</keyword>
<keyword id="KW-0597">Phosphoprotein</keyword>
<keyword id="KW-0677">Repeat</keyword>
<keyword id="KW-0964">Secreted</keyword>
<keyword id="KW-0732">Signal</keyword>
<keyword id="KW-0813">Transport</keyword>
<keyword id="KW-0850">VLDL</keyword>
<sequence length="317" mass="36035">MKALWVALVVTLLAGCRAEVEPEPEPEVQLGQEQPEWQGSQPWELALGRLWDYLRWVQTLSDQVQEELLSTQVTQELTALMEETMKEVKAYKAELEEQLSPVAQETRARLSKELQAAQARLGTDMEDLRSRLAHYRNEVQAMLGQTTDELRNRLASHLRKLRKRLLRDAEDLQKRLAVYRAGAVEGAERSVSALRERLGPLVEQGRLGTATTSTLGSQPLRERAEAWGQKLRGRLEAVGARAQDRLDKMREQLEEVRAKVEEQASQMRLQAETFQARLKGWFQPLVEDLQRQWAGLVEKVQQLAVGTTPTPAASKNQ</sequence>
<protein>
    <recommendedName>
        <fullName>Apolipoprotein E</fullName>
        <shortName>Apo-E</shortName>
    </recommendedName>
</protein>